<protein>
    <recommendedName>
        <fullName evidence="1">Small ribosomal subunit biogenesis GTPase RsgA</fullName>
        <ecNumber evidence="1">3.6.1.-</ecNumber>
    </recommendedName>
</protein>
<keyword id="KW-0963">Cytoplasm</keyword>
<keyword id="KW-0342">GTP-binding</keyword>
<keyword id="KW-0378">Hydrolase</keyword>
<keyword id="KW-0479">Metal-binding</keyword>
<keyword id="KW-0547">Nucleotide-binding</keyword>
<keyword id="KW-1185">Reference proteome</keyword>
<keyword id="KW-0690">Ribosome biogenesis</keyword>
<keyword id="KW-0694">RNA-binding</keyword>
<keyword id="KW-0699">rRNA-binding</keyword>
<keyword id="KW-0862">Zinc</keyword>
<dbReference type="EC" id="3.6.1.-" evidence="1"/>
<dbReference type="EMBL" id="AE006470">
    <property type="protein sequence ID" value="AAM72799.1"/>
    <property type="molecule type" value="Genomic_DNA"/>
</dbReference>
<dbReference type="RefSeq" id="NP_662457.1">
    <property type="nucleotide sequence ID" value="NC_002932.3"/>
</dbReference>
<dbReference type="RefSeq" id="WP_010933238.1">
    <property type="nucleotide sequence ID" value="NC_002932.3"/>
</dbReference>
<dbReference type="SMR" id="Q8KC52"/>
<dbReference type="STRING" id="194439.CT1574"/>
<dbReference type="EnsemblBacteria" id="AAM72799">
    <property type="protein sequence ID" value="AAM72799"/>
    <property type="gene ID" value="CT1574"/>
</dbReference>
<dbReference type="KEGG" id="cte:CT1574"/>
<dbReference type="PATRIC" id="fig|194439.7.peg.1425"/>
<dbReference type="eggNOG" id="COG1162">
    <property type="taxonomic scope" value="Bacteria"/>
</dbReference>
<dbReference type="HOGENOM" id="CLU_033617_2_0_10"/>
<dbReference type="OrthoDB" id="9809485at2"/>
<dbReference type="Proteomes" id="UP000001007">
    <property type="component" value="Chromosome"/>
</dbReference>
<dbReference type="GO" id="GO:0005737">
    <property type="term" value="C:cytoplasm"/>
    <property type="evidence" value="ECO:0007669"/>
    <property type="project" value="UniProtKB-SubCell"/>
</dbReference>
<dbReference type="GO" id="GO:0005525">
    <property type="term" value="F:GTP binding"/>
    <property type="evidence" value="ECO:0007669"/>
    <property type="project" value="UniProtKB-UniRule"/>
</dbReference>
<dbReference type="GO" id="GO:0003924">
    <property type="term" value="F:GTPase activity"/>
    <property type="evidence" value="ECO:0007669"/>
    <property type="project" value="UniProtKB-UniRule"/>
</dbReference>
<dbReference type="GO" id="GO:0046872">
    <property type="term" value="F:metal ion binding"/>
    <property type="evidence" value="ECO:0007669"/>
    <property type="project" value="UniProtKB-KW"/>
</dbReference>
<dbReference type="GO" id="GO:0019843">
    <property type="term" value="F:rRNA binding"/>
    <property type="evidence" value="ECO:0007669"/>
    <property type="project" value="UniProtKB-KW"/>
</dbReference>
<dbReference type="GO" id="GO:0042274">
    <property type="term" value="P:ribosomal small subunit biogenesis"/>
    <property type="evidence" value="ECO:0007669"/>
    <property type="project" value="UniProtKB-UniRule"/>
</dbReference>
<dbReference type="CDD" id="cd01854">
    <property type="entry name" value="YjeQ_EngC"/>
    <property type="match status" value="1"/>
</dbReference>
<dbReference type="Gene3D" id="2.40.50.140">
    <property type="entry name" value="Nucleic acid-binding proteins"/>
    <property type="match status" value="1"/>
</dbReference>
<dbReference type="Gene3D" id="3.40.50.300">
    <property type="entry name" value="P-loop containing nucleotide triphosphate hydrolases"/>
    <property type="match status" value="1"/>
</dbReference>
<dbReference type="Gene3D" id="1.10.40.50">
    <property type="entry name" value="Probable gtpase engc, domain 3"/>
    <property type="match status" value="1"/>
</dbReference>
<dbReference type="HAMAP" id="MF_01820">
    <property type="entry name" value="GTPase_RsgA"/>
    <property type="match status" value="1"/>
</dbReference>
<dbReference type="InterPro" id="IPR030378">
    <property type="entry name" value="G_CP_dom"/>
</dbReference>
<dbReference type="InterPro" id="IPR012340">
    <property type="entry name" value="NA-bd_OB-fold"/>
</dbReference>
<dbReference type="InterPro" id="IPR027417">
    <property type="entry name" value="P-loop_NTPase"/>
</dbReference>
<dbReference type="InterPro" id="IPR004881">
    <property type="entry name" value="Ribosome_biogen_GTPase_RsgA"/>
</dbReference>
<dbReference type="InterPro" id="IPR010914">
    <property type="entry name" value="RsgA_GTPase_dom"/>
</dbReference>
<dbReference type="NCBIfam" id="TIGR00157">
    <property type="entry name" value="ribosome small subunit-dependent GTPase A"/>
    <property type="match status" value="1"/>
</dbReference>
<dbReference type="PANTHER" id="PTHR32120">
    <property type="entry name" value="SMALL RIBOSOMAL SUBUNIT BIOGENESIS GTPASE RSGA"/>
    <property type="match status" value="1"/>
</dbReference>
<dbReference type="PANTHER" id="PTHR32120:SF11">
    <property type="entry name" value="SMALL RIBOSOMAL SUBUNIT BIOGENESIS GTPASE RSGA 1, MITOCHONDRIAL-RELATED"/>
    <property type="match status" value="1"/>
</dbReference>
<dbReference type="Pfam" id="PF03193">
    <property type="entry name" value="RsgA_GTPase"/>
    <property type="match status" value="1"/>
</dbReference>
<dbReference type="SUPFAM" id="SSF52540">
    <property type="entry name" value="P-loop containing nucleoside triphosphate hydrolases"/>
    <property type="match status" value="1"/>
</dbReference>
<dbReference type="PROSITE" id="PS50936">
    <property type="entry name" value="ENGC_GTPASE"/>
    <property type="match status" value="1"/>
</dbReference>
<dbReference type="PROSITE" id="PS51721">
    <property type="entry name" value="G_CP"/>
    <property type="match status" value="1"/>
</dbReference>
<proteinExistence type="inferred from homology"/>
<comment type="function">
    <text evidence="1">One of several proteins that assist in the late maturation steps of the functional core of the 30S ribosomal subunit. Helps release RbfA from mature subunits. May play a role in the assembly of ribosomal proteins into the subunit. Circularly permuted GTPase that catalyzes slow GTP hydrolysis, GTPase activity is stimulated by the 30S ribosomal subunit.</text>
</comment>
<comment type="cofactor">
    <cofactor evidence="1">
        <name>Zn(2+)</name>
        <dbReference type="ChEBI" id="CHEBI:29105"/>
    </cofactor>
    <text evidence="1">Binds 1 zinc ion per subunit.</text>
</comment>
<comment type="subunit">
    <text evidence="1">Monomer. Associates with 30S ribosomal subunit, binds 16S rRNA.</text>
</comment>
<comment type="subcellular location">
    <subcellularLocation>
        <location evidence="1">Cytoplasm</location>
    </subcellularLocation>
</comment>
<comment type="similarity">
    <text evidence="1">Belongs to the TRAFAC class YlqF/YawG GTPase family. RsgA subfamily.</text>
</comment>
<sequence length="311" mass="34460">MKETLSGVVTRVTGASYIVETGDGLKVRCRTVPGTVSENEGSNLVAVGDRVEFRPKASETDMAEGVITRVEERRTALVRRREVRRNRSKEKEQVIVANIDQLVLITSFDDPPFNSRLVDRYLVFAESEKLPLLIVVNKIDLDEEGMVEEDLEVYRQLDCNICLVSAEDGRGIEELRELLRDRVSAFSGHSGVGKSTLINLLVGCEELRTAETSGKTGKGVHTTTSSAMFQLPGGGYVIDTPGIREFNLAGITRENLRFYYTEFLRYMPECTFSSCSHTVEPGCAVIAAVESGSIARERYESYLALLDSLAE</sequence>
<name>RSGA_CHLTE</name>
<evidence type="ECO:0000255" key="1">
    <source>
        <dbReference type="HAMAP-Rule" id="MF_01820"/>
    </source>
</evidence>
<evidence type="ECO:0000255" key="2">
    <source>
        <dbReference type="PROSITE-ProRule" id="PRU01058"/>
    </source>
</evidence>
<feature type="chain" id="PRO_0000171471" description="Small ribosomal subunit biogenesis GTPase RsgA">
    <location>
        <begin position="1"/>
        <end position="311"/>
    </location>
</feature>
<feature type="domain" description="CP-type G" evidence="2">
    <location>
        <begin position="88"/>
        <end position="246"/>
    </location>
</feature>
<feature type="binding site" evidence="1">
    <location>
        <begin position="137"/>
        <end position="140"/>
    </location>
    <ligand>
        <name>GTP</name>
        <dbReference type="ChEBI" id="CHEBI:37565"/>
    </ligand>
</feature>
<feature type="binding site" evidence="1">
    <location>
        <begin position="188"/>
        <end position="196"/>
    </location>
    <ligand>
        <name>GTP</name>
        <dbReference type="ChEBI" id="CHEBI:37565"/>
    </ligand>
</feature>
<feature type="binding site" evidence="1">
    <location>
        <position position="270"/>
    </location>
    <ligand>
        <name>Zn(2+)</name>
        <dbReference type="ChEBI" id="CHEBI:29105"/>
    </ligand>
</feature>
<feature type="binding site" evidence="1">
    <location>
        <position position="275"/>
    </location>
    <ligand>
        <name>Zn(2+)</name>
        <dbReference type="ChEBI" id="CHEBI:29105"/>
    </ligand>
</feature>
<feature type="binding site" evidence="1">
    <location>
        <position position="277"/>
    </location>
    <ligand>
        <name>Zn(2+)</name>
        <dbReference type="ChEBI" id="CHEBI:29105"/>
    </ligand>
</feature>
<feature type="binding site" evidence="1">
    <location>
        <position position="283"/>
    </location>
    <ligand>
        <name>Zn(2+)</name>
        <dbReference type="ChEBI" id="CHEBI:29105"/>
    </ligand>
</feature>
<accession>Q8KC52</accession>
<gene>
    <name evidence="1" type="primary">rsgA</name>
    <name type="ordered locus">CT1574</name>
</gene>
<reference key="1">
    <citation type="journal article" date="2002" name="Proc. Natl. Acad. Sci. U.S.A.">
        <title>The complete genome sequence of Chlorobium tepidum TLS, a photosynthetic, anaerobic, green-sulfur bacterium.</title>
        <authorList>
            <person name="Eisen J.A."/>
            <person name="Nelson K.E."/>
            <person name="Paulsen I.T."/>
            <person name="Heidelberg J.F."/>
            <person name="Wu M."/>
            <person name="Dodson R.J."/>
            <person name="DeBoy R.T."/>
            <person name="Gwinn M.L."/>
            <person name="Nelson W.C."/>
            <person name="Haft D.H."/>
            <person name="Hickey E.K."/>
            <person name="Peterson J.D."/>
            <person name="Durkin A.S."/>
            <person name="Kolonay J.F."/>
            <person name="Yang F."/>
            <person name="Holt I.E."/>
            <person name="Umayam L.A."/>
            <person name="Mason T.M."/>
            <person name="Brenner M."/>
            <person name="Shea T.P."/>
            <person name="Parksey D.S."/>
            <person name="Nierman W.C."/>
            <person name="Feldblyum T.V."/>
            <person name="Hansen C.L."/>
            <person name="Craven M.B."/>
            <person name="Radune D."/>
            <person name="Vamathevan J.J."/>
            <person name="Khouri H.M."/>
            <person name="White O."/>
            <person name="Gruber T.M."/>
            <person name="Ketchum K.A."/>
            <person name="Venter J.C."/>
            <person name="Tettelin H."/>
            <person name="Bryant D.A."/>
            <person name="Fraser C.M."/>
        </authorList>
    </citation>
    <scope>NUCLEOTIDE SEQUENCE [LARGE SCALE GENOMIC DNA]</scope>
    <source>
        <strain>ATCC 49652 / DSM 12025 / NBRC 103806 / TLS</strain>
    </source>
</reference>
<organism>
    <name type="scientific">Chlorobaculum tepidum (strain ATCC 49652 / DSM 12025 / NBRC 103806 / TLS)</name>
    <name type="common">Chlorobium tepidum</name>
    <dbReference type="NCBI Taxonomy" id="194439"/>
    <lineage>
        <taxon>Bacteria</taxon>
        <taxon>Pseudomonadati</taxon>
        <taxon>Chlorobiota</taxon>
        <taxon>Chlorobiia</taxon>
        <taxon>Chlorobiales</taxon>
        <taxon>Chlorobiaceae</taxon>
        <taxon>Chlorobaculum</taxon>
    </lineage>
</organism>